<gene>
    <name evidence="1" type="primary">glyS</name>
    <name type="ordered locus">RT0838</name>
</gene>
<proteinExistence type="inferred from homology"/>
<sequence>MSELLLELFSEEIPAFMQKNAEEAYLNIFTKIFKENEIFAQVQVFVGPRRITLHATNLPKVILPKEEEIKGPSIEAPEIAINGFCKVHNVNKFDLSTKLINKKLYYFFVKKTQAREMKEILPKIIIDAINKYSWIKSMFWGCYKIKWIRPLRNILCIFDGEILPLQFGHLSANNITYGHRLTNNKKLEIIDFENYRNKLLENNVILERLKREEIIKVGLLELANAQNLNIKQDARLIEEVTGLNEFPVVLLGKIPQKFLELPEEVIISVMRKHQKYFCLFDKTGNFAPYFLFVINGRFVNIELILQGNEKVLSARLADALYFYKHDIAKTLESRFSKLESVIFHAKLGSLKEKVDRITDICRYIAPDNIDLIMAARLCKSDLVSDMVGEFPDLQGIMGYYYAKHEGLNEEVAKAIRDHYKPQGLNDNVPSGNATLLALADKLDSLVGLIIVGETPNGSGDPYALRRQALGIIRIIIENKLEINFINLINFAVSLYKVPTNTHLDSVISFFEERAKFYFKNDYDIALINAVLDLNLVDTKFKLDTLKEFLVQDVGKQLLNAYKRVSNIIGNQKITGLVDVSLFSTQYEKELFEVIQIISQQIIAIIANKDYKKALNLLSSLLKPITSFFDNVLVNDSDPKIAQNRLSLLHNTCEVFDKVVKFCRL</sequence>
<reference key="1">
    <citation type="journal article" date="2004" name="J. Bacteriol.">
        <title>Complete genome sequence of Rickettsia typhi and comparison with sequences of other Rickettsiae.</title>
        <authorList>
            <person name="McLeod M.P."/>
            <person name="Qin X."/>
            <person name="Karpathy S.E."/>
            <person name="Gioia J."/>
            <person name="Highlander S.K."/>
            <person name="Fox G.E."/>
            <person name="McNeill T.Z."/>
            <person name="Jiang H."/>
            <person name="Muzny D."/>
            <person name="Jacob L.S."/>
            <person name="Hawes A.C."/>
            <person name="Sodergren E."/>
            <person name="Gill R."/>
            <person name="Hume J."/>
            <person name="Morgan M."/>
            <person name="Fan G."/>
            <person name="Amin A.G."/>
            <person name="Gibbs R.A."/>
            <person name="Hong C."/>
            <person name="Yu X.-J."/>
            <person name="Walker D.H."/>
            <person name="Weinstock G.M."/>
        </authorList>
    </citation>
    <scope>NUCLEOTIDE SEQUENCE [LARGE SCALE GENOMIC DNA]</scope>
    <source>
        <strain>ATCC VR-144 / Wilmington</strain>
    </source>
</reference>
<evidence type="ECO:0000255" key="1">
    <source>
        <dbReference type="HAMAP-Rule" id="MF_00255"/>
    </source>
</evidence>
<organism>
    <name type="scientific">Rickettsia typhi (strain ATCC VR-144 / Wilmington)</name>
    <dbReference type="NCBI Taxonomy" id="257363"/>
    <lineage>
        <taxon>Bacteria</taxon>
        <taxon>Pseudomonadati</taxon>
        <taxon>Pseudomonadota</taxon>
        <taxon>Alphaproteobacteria</taxon>
        <taxon>Rickettsiales</taxon>
        <taxon>Rickettsiaceae</taxon>
        <taxon>Rickettsieae</taxon>
        <taxon>Rickettsia</taxon>
        <taxon>typhus group</taxon>
    </lineage>
</organism>
<dbReference type="EC" id="6.1.1.14" evidence="1"/>
<dbReference type="EMBL" id="AE017197">
    <property type="protein sequence ID" value="AAU04292.1"/>
    <property type="molecule type" value="Genomic_DNA"/>
</dbReference>
<dbReference type="RefSeq" id="WP_011191266.1">
    <property type="nucleotide sequence ID" value="NC_006142.1"/>
</dbReference>
<dbReference type="SMR" id="Q68VR4"/>
<dbReference type="KEGG" id="rty:RT0838"/>
<dbReference type="eggNOG" id="COG0751">
    <property type="taxonomic scope" value="Bacteria"/>
</dbReference>
<dbReference type="HOGENOM" id="CLU_007220_2_2_5"/>
<dbReference type="OrthoDB" id="9775440at2"/>
<dbReference type="Proteomes" id="UP000000604">
    <property type="component" value="Chromosome"/>
</dbReference>
<dbReference type="GO" id="GO:0005829">
    <property type="term" value="C:cytosol"/>
    <property type="evidence" value="ECO:0007669"/>
    <property type="project" value="TreeGrafter"/>
</dbReference>
<dbReference type="GO" id="GO:0004814">
    <property type="term" value="F:arginine-tRNA ligase activity"/>
    <property type="evidence" value="ECO:0007669"/>
    <property type="project" value="InterPro"/>
</dbReference>
<dbReference type="GO" id="GO:0005524">
    <property type="term" value="F:ATP binding"/>
    <property type="evidence" value="ECO:0007669"/>
    <property type="project" value="UniProtKB-UniRule"/>
</dbReference>
<dbReference type="GO" id="GO:0004820">
    <property type="term" value="F:glycine-tRNA ligase activity"/>
    <property type="evidence" value="ECO:0007669"/>
    <property type="project" value="UniProtKB-UniRule"/>
</dbReference>
<dbReference type="GO" id="GO:0006420">
    <property type="term" value="P:arginyl-tRNA aminoacylation"/>
    <property type="evidence" value="ECO:0007669"/>
    <property type="project" value="InterPro"/>
</dbReference>
<dbReference type="GO" id="GO:0006426">
    <property type="term" value="P:glycyl-tRNA aminoacylation"/>
    <property type="evidence" value="ECO:0007669"/>
    <property type="project" value="UniProtKB-UniRule"/>
</dbReference>
<dbReference type="HAMAP" id="MF_00255">
    <property type="entry name" value="Gly_tRNA_synth_beta"/>
    <property type="match status" value="1"/>
</dbReference>
<dbReference type="InterPro" id="IPR008909">
    <property type="entry name" value="DALR_anticod-bd"/>
</dbReference>
<dbReference type="InterPro" id="IPR015944">
    <property type="entry name" value="Gly-tRNA-synth_bsu"/>
</dbReference>
<dbReference type="InterPro" id="IPR006194">
    <property type="entry name" value="Gly-tRNA-synth_heterodimer"/>
</dbReference>
<dbReference type="NCBIfam" id="TIGR00211">
    <property type="entry name" value="glyS"/>
    <property type="match status" value="1"/>
</dbReference>
<dbReference type="PANTHER" id="PTHR30075:SF2">
    <property type="entry name" value="GLYCINE--TRNA LIGASE, CHLOROPLASTIC_MITOCHONDRIAL 2"/>
    <property type="match status" value="1"/>
</dbReference>
<dbReference type="PANTHER" id="PTHR30075">
    <property type="entry name" value="GLYCYL-TRNA SYNTHETASE"/>
    <property type="match status" value="1"/>
</dbReference>
<dbReference type="Pfam" id="PF05746">
    <property type="entry name" value="DALR_1"/>
    <property type="match status" value="1"/>
</dbReference>
<dbReference type="Pfam" id="PF02092">
    <property type="entry name" value="tRNA_synt_2f"/>
    <property type="match status" value="1"/>
</dbReference>
<dbReference type="PRINTS" id="PR01045">
    <property type="entry name" value="TRNASYNTHGB"/>
</dbReference>
<dbReference type="SUPFAM" id="SSF109604">
    <property type="entry name" value="HD-domain/PDEase-like"/>
    <property type="match status" value="1"/>
</dbReference>
<dbReference type="PROSITE" id="PS50861">
    <property type="entry name" value="AA_TRNA_LIGASE_II_GLYAB"/>
    <property type="match status" value="1"/>
</dbReference>
<feature type="chain" id="PRO_0000274899" description="Glycine--tRNA ligase beta subunit">
    <location>
        <begin position="1"/>
        <end position="664"/>
    </location>
</feature>
<comment type="catalytic activity">
    <reaction evidence="1">
        <text>tRNA(Gly) + glycine + ATP = glycyl-tRNA(Gly) + AMP + diphosphate</text>
        <dbReference type="Rhea" id="RHEA:16013"/>
        <dbReference type="Rhea" id="RHEA-COMP:9664"/>
        <dbReference type="Rhea" id="RHEA-COMP:9683"/>
        <dbReference type="ChEBI" id="CHEBI:30616"/>
        <dbReference type="ChEBI" id="CHEBI:33019"/>
        <dbReference type="ChEBI" id="CHEBI:57305"/>
        <dbReference type="ChEBI" id="CHEBI:78442"/>
        <dbReference type="ChEBI" id="CHEBI:78522"/>
        <dbReference type="ChEBI" id="CHEBI:456215"/>
        <dbReference type="EC" id="6.1.1.14"/>
    </reaction>
</comment>
<comment type="subunit">
    <text evidence="1">Tetramer of two alpha and two beta subunits.</text>
</comment>
<comment type="subcellular location">
    <subcellularLocation>
        <location evidence="1">Cytoplasm</location>
    </subcellularLocation>
</comment>
<comment type="similarity">
    <text evidence="1">Belongs to the class-II aminoacyl-tRNA synthetase family.</text>
</comment>
<name>SYGB_RICTY</name>
<keyword id="KW-0030">Aminoacyl-tRNA synthetase</keyword>
<keyword id="KW-0067">ATP-binding</keyword>
<keyword id="KW-0963">Cytoplasm</keyword>
<keyword id="KW-0436">Ligase</keyword>
<keyword id="KW-0547">Nucleotide-binding</keyword>
<keyword id="KW-0648">Protein biosynthesis</keyword>
<protein>
    <recommendedName>
        <fullName evidence="1">Glycine--tRNA ligase beta subunit</fullName>
        <ecNumber evidence="1">6.1.1.14</ecNumber>
    </recommendedName>
    <alternativeName>
        <fullName evidence="1">Glycyl-tRNA synthetase beta subunit</fullName>
        <shortName evidence="1">GlyRS</shortName>
    </alternativeName>
</protein>
<accession>Q68VR4</accession>